<proteinExistence type="evidence at transcript level"/>
<gene>
    <name evidence="3" type="primary">alnI</name>
    <name type="ORF">ANIA_11200</name>
</gene>
<protein>
    <recommendedName>
        <fullName evidence="3">Asperlin biosynthesis cluster protein I</fullName>
    </recommendedName>
</protein>
<organism>
    <name type="scientific">Emericella nidulans (strain FGSC A4 / ATCC 38163 / CBS 112.46 / NRRL 194 / M139)</name>
    <name type="common">Aspergillus nidulans</name>
    <dbReference type="NCBI Taxonomy" id="227321"/>
    <lineage>
        <taxon>Eukaryota</taxon>
        <taxon>Fungi</taxon>
        <taxon>Dikarya</taxon>
        <taxon>Ascomycota</taxon>
        <taxon>Pezizomycotina</taxon>
        <taxon>Eurotiomycetes</taxon>
        <taxon>Eurotiomycetidae</taxon>
        <taxon>Eurotiales</taxon>
        <taxon>Aspergillaceae</taxon>
        <taxon>Aspergillus</taxon>
        <taxon>Aspergillus subgen. Nidulantes</taxon>
    </lineage>
</organism>
<dbReference type="EMBL" id="BN001306">
    <property type="protein sequence ID" value="CBF82290.1"/>
    <property type="molecule type" value="Genomic_DNA"/>
</dbReference>
<dbReference type="EnsemblFungi" id="CBF82290">
    <property type="protein sequence ID" value="CBF82290"/>
    <property type="gene ID" value="ANIA_11200"/>
</dbReference>
<dbReference type="VEuPathDB" id="FungiDB:AN11200"/>
<dbReference type="eggNOG" id="ENOG502SZ1I">
    <property type="taxonomic scope" value="Eukaryota"/>
</dbReference>
<dbReference type="HOGENOM" id="CLU_1245083_0_0_1"/>
<dbReference type="InParanoid" id="C8VJQ9"/>
<dbReference type="OMA" id="MTTTCPC"/>
<dbReference type="OrthoDB" id="4482965at2759"/>
<dbReference type="Proteomes" id="UP000000560">
    <property type="component" value="Chromosome VI"/>
</dbReference>
<keyword id="KW-1185">Reference proteome</keyword>
<reference key="1">
    <citation type="journal article" date="2005" name="Nature">
        <title>Sequencing of Aspergillus nidulans and comparative analysis with A. fumigatus and A. oryzae.</title>
        <authorList>
            <person name="Galagan J.E."/>
            <person name="Calvo S.E."/>
            <person name="Cuomo C."/>
            <person name="Ma L.-J."/>
            <person name="Wortman J.R."/>
            <person name="Batzoglou S."/>
            <person name="Lee S.-I."/>
            <person name="Bastuerkmen M."/>
            <person name="Spevak C.C."/>
            <person name="Clutterbuck J."/>
            <person name="Kapitonov V."/>
            <person name="Jurka J."/>
            <person name="Scazzocchio C."/>
            <person name="Farman M.L."/>
            <person name="Butler J."/>
            <person name="Purcell S."/>
            <person name="Harris S."/>
            <person name="Braus G.H."/>
            <person name="Draht O."/>
            <person name="Busch S."/>
            <person name="D'Enfert C."/>
            <person name="Bouchier C."/>
            <person name="Goldman G.H."/>
            <person name="Bell-Pedersen D."/>
            <person name="Griffiths-Jones S."/>
            <person name="Doonan J.H."/>
            <person name="Yu J."/>
            <person name="Vienken K."/>
            <person name="Pain A."/>
            <person name="Freitag M."/>
            <person name="Selker E.U."/>
            <person name="Archer D.B."/>
            <person name="Penalva M.A."/>
            <person name="Oakley B.R."/>
            <person name="Momany M."/>
            <person name="Tanaka T."/>
            <person name="Kumagai T."/>
            <person name="Asai K."/>
            <person name="Machida M."/>
            <person name="Nierman W.C."/>
            <person name="Denning D.W."/>
            <person name="Caddick M.X."/>
            <person name="Hynes M."/>
            <person name="Paoletti M."/>
            <person name="Fischer R."/>
            <person name="Miller B.L."/>
            <person name="Dyer P.S."/>
            <person name="Sachs M.S."/>
            <person name="Osmani S.A."/>
            <person name="Birren B.W."/>
        </authorList>
    </citation>
    <scope>NUCLEOTIDE SEQUENCE [LARGE SCALE GENOMIC DNA]</scope>
    <source>
        <strain>FGSC A4 / ATCC 38163 / CBS 112.46 / NRRL 194 / M139</strain>
    </source>
</reference>
<reference key="2">
    <citation type="journal article" date="2009" name="Fungal Genet. Biol.">
        <title>The 2008 update of the Aspergillus nidulans genome annotation: a community effort.</title>
        <authorList>
            <person name="Wortman J.R."/>
            <person name="Gilsenan J.M."/>
            <person name="Joardar V."/>
            <person name="Deegan J."/>
            <person name="Clutterbuck J."/>
            <person name="Andersen M.R."/>
            <person name="Archer D."/>
            <person name="Bencina M."/>
            <person name="Braus G."/>
            <person name="Coutinho P."/>
            <person name="von Dohren H."/>
            <person name="Doonan J."/>
            <person name="Driessen A.J."/>
            <person name="Durek P."/>
            <person name="Espeso E."/>
            <person name="Fekete E."/>
            <person name="Flipphi M."/>
            <person name="Estrada C.G."/>
            <person name="Geysens S."/>
            <person name="Goldman G."/>
            <person name="de Groot P.W."/>
            <person name="Hansen K."/>
            <person name="Harris S.D."/>
            <person name="Heinekamp T."/>
            <person name="Helmstaedt K."/>
            <person name="Henrissat B."/>
            <person name="Hofmann G."/>
            <person name="Homan T."/>
            <person name="Horio T."/>
            <person name="Horiuchi H."/>
            <person name="James S."/>
            <person name="Jones M."/>
            <person name="Karaffa L."/>
            <person name="Karanyi Z."/>
            <person name="Kato M."/>
            <person name="Keller N."/>
            <person name="Kelly D.E."/>
            <person name="Kiel J.A."/>
            <person name="Kim J.M."/>
            <person name="van der Klei I.J."/>
            <person name="Klis F.M."/>
            <person name="Kovalchuk A."/>
            <person name="Krasevec N."/>
            <person name="Kubicek C.P."/>
            <person name="Liu B."/>
            <person name="Maccabe A."/>
            <person name="Meyer V."/>
            <person name="Mirabito P."/>
            <person name="Miskei M."/>
            <person name="Mos M."/>
            <person name="Mullins J."/>
            <person name="Nelson D.R."/>
            <person name="Nielsen J."/>
            <person name="Oakley B.R."/>
            <person name="Osmani S.A."/>
            <person name="Pakula T."/>
            <person name="Paszewski A."/>
            <person name="Paulsen I."/>
            <person name="Pilsyk S."/>
            <person name="Pocsi I."/>
            <person name="Punt P.J."/>
            <person name="Ram A.F."/>
            <person name="Ren Q."/>
            <person name="Robellet X."/>
            <person name="Robson G."/>
            <person name="Seiboth B."/>
            <person name="van Solingen P."/>
            <person name="Specht T."/>
            <person name="Sun J."/>
            <person name="Taheri-Talesh N."/>
            <person name="Takeshita N."/>
            <person name="Ussery D."/>
            <person name="vanKuyk P.A."/>
            <person name="Visser H."/>
            <person name="van de Vondervoort P.J."/>
            <person name="de Vries R.P."/>
            <person name="Walton J."/>
            <person name="Xiang X."/>
            <person name="Xiong Y."/>
            <person name="Zeng A.P."/>
            <person name="Brandt B.W."/>
            <person name="Cornell M.J."/>
            <person name="van den Hondel C.A."/>
            <person name="Visser J."/>
            <person name="Oliver S.G."/>
            <person name="Turner G."/>
        </authorList>
    </citation>
    <scope>GENOME REANNOTATION</scope>
    <source>
        <strain>FGSC A4 / ATCC 38163 / CBS 112.46 / NRRL 194 / M139</strain>
    </source>
</reference>
<reference key="3">
    <citation type="journal article" date="2018" name="ACS Chem. Biol.">
        <title>Hybrid transcription factor engineering activates the silent secondary metabolite gene cluster for (+)-asperlin in Aspergillus nidulans.</title>
        <authorList>
            <person name="Grau M.F."/>
            <person name="Entwistle R."/>
            <person name="Chiang Y.M."/>
            <person name="Ahuja M."/>
            <person name="Oakley C.E."/>
            <person name="Akashi T."/>
            <person name="Wang C.C.C."/>
            <person name="Todd R.B."/>
            <person name="Oakley B.R."/>
        </authorList>
    </citation>
    <scope>IDENTIFICATION</scope>
    <scope>DISRUPTION PHENOTYPE</scope>
    <scope>FUNCTION</scope>
    <scope>INDUCTION</scope>
    <scope>PATHWAY</scope>
</reference>
<name>ALNI_EMENI</name>
<sequence length="219" mass="22424">MFSSTRRAEGPCATELTQVSSLLPPRGPYEFSLLPTLTRPLEDLSKCIEGARQTSATANGYSPTGLVPLADSILEICQAACTAYGLVDGAIAAGVGTGSSDNSPTATGIGAAGLTGDRPSSSGASTWRCVKTPMTLGSLTLQNEEESLLARQIVYAVLTSLSALLREVYVREKDVVSETDVVGEGGVGAGAALYGREGAGAVSQCLSRVLALLGKIVPE</sequence>
<comment type="function">
    <text evidence="2">Part of the gene cluster that mediates the biosynthesis of asperlin, a polyketide showing anti-inflammatory, antitumor and antibiotic activities (PubMed:30339758). The first step of the asperlin biosynthesis is the production of the intermediate 2,4,6-octatrienoic acid by the highly redusing polyketide synthase alnA with cleavage of the PKS product by the esterase alnB (PubMed:30339758). 2,4,6-octatrienoic acid is further converted to asperlin via several steps involving the remaining enzymes from the cluster (PubMed:30339758).</text>
</comment>
<comment type="pathway">
    <text evidence="2">Polyketide biosynthesis.</text>
</comment>
<comment type="induction">
    <text evidence="2">Expression is controlled by the asperlin biosynthesis cluster-specific transcription factor alnR.</text>
</comment>
<comment type="disruption phenotype">
    <text evidence="2">Fully eliminates the production of asperlin.</text>
</comment>
<accession>C8VJQ9</accession>
<evidence type="ECO:0000256" key="1">
    <source>
        <dbReference type="SAM" id="MobiDB-lite"/>
    </source>
</evidence>
<evidence type="ECO:0000269" key="2">
    <source>
    </source>
</evidence>
<evidence type="ECO:0000303" key="3">
    <source>
    </source>
</evidence>
<feature type="chain" id="PRO_0000445951" description="Asperlin biosynthesis cluster protein I">
    <location>
        <begin position="1"/>
        <end position="219"/>
    </location>
</feature>
<feature type="region of interest" description="Disordered" evidence="1">
    <location>
        <begin position="97"/>
        <end position="124"/>
    </location>
</feature>
<feature type="compositionally biased region" description="Low complexity" evidence="1">
    <location>
        <begin position="105"/>
        <end position="116"/>
    </location>
</feature>